<evidence type="ECO:0000250" key="1"/>
<evidence type="ECO:0000255" key="2"/>
<evidence type="ECO:0000305" key="3"/>
<organism>
    <name type="scientific">Drosophila guanche</name>
    <name type="common">Fruit fly</name>
    <dbReference type="NCBI Taxonomy" id="7266"/>
    <lineage>
        <taxon>Eukaryota</taxon>
        <taxon>Metazoa</taxon>
        <taxon>Ecdysozoa</taxon>
        <taxon>Arthropoda</taxon>
        <taxon>Hexapoda</taxon>
        <taxon>Insecta</taxon>
        <taxon>Pterygota</taxon>
        <taxon>Neoptera</taxon>
        <taxon>Endopterygota</taxon>
        <taxon>Diptera</taxon>
        <taxon>Brachycera</taxon>
        <taxon>Muscomorpha</taxon>
        <taxon>Ephydroidea</taxon>
        <taxon>Drosophilidae</taxon>
        <taxon>Drosophila</taxon>
        <taxon>Sophophora</taxon>
    </lineage>
</organism>
<geneLocation type="mitochondrion"/>
<proteinExistence type="inferred from homology"/>
<dbReference type="EC" id="7.1.1.2"/>
<dbReference type="EMBL" id="U07294">
    <property type="protein sequence ID" value="AAA76620.1"/>
    <property type="molecule type" value="Genomic_DNA"/>
</dbReference>
<dbReference type="EMBL" id="U07326">
    <property type="protein sequence ID" value="AAA76648.1"/>
    <property type="molecule type" value="Genomic_DNA"/>
</dbReference>
<dbReference type="SMR" id="P51931"/>
<dbReference type="GO" id="GO:0005743">
    <property type="term" value="C:mitochondrial inner membrane"/>
    <property type="evidence" value="ECO:0007669"/>
    <property type="project" value="UniProtKB-SubCell"/>
</dbReference>
<dbReference type="GO" id="GO:0008137">
    <property type="term" value="F:NADH dehydrogenase (ubiquinone) activity"/>
    <property type="evidence" value="ECO:0007669"/>
    <property type="project" value="UniProtKB-EC"/>
</dbReference>
<dbReference type="GO" id="GO:0009060">
    <property type="term" value="P:aerobic respiration"/>
    <property type="evidence" value="ECO:0007669"/>
    <property type="project" value="TreeGrafter"/>
</dbReference>
<dbReference type="InterPro" id="IPR001694">
    <property type="entry name" value="NADH_UbQ_OxRdtase_su1/FPO"/>
</dbReference>
<dbReference type="InterPro" id="IPR018086">
    <property type="entry name" value="NADH_UbQ_OxRdtase_su1_CS"/>
</dbReference>
<dbReference type="PANTHER" id="PTHR11432">
    <property type="entry name" value="NADH DEHYDROGENASE SUBUNIT 1"/>
    <property type="match status" value="1"/>
</dbReference>
<dbReference type="PANTHER" id="PTHR11432:SF3">
    <property type="entry name" value="NADH-UBIQUINONE OXIDOREDUCTASE CHAIN 1"/>
    <property type="match status" value="1"/>
</dbReference>
<dbReference type="Pfam" id="PF00146">
    <property type="entry name" value="NADHdh"/>
    <property type="match status" value="1"/>
</dbReference>
<dbReference type="PROSITE" id="PS00667">
    <property type="entry name" value="COMPLEX1_ND1_1"/>
    <property type="match status" value="1"/>
</dbReference>
<accession>P51931</accession>
<accession>Q34320</accession>
<feature type="chain" id="PRO_0000117390" description="NADH-ubiquinone oxidoreductase chain 1">
    <location>
        <begin position="1"/>
        <end position="163"/>
    </location>
</feature>
<feature type="transmembrane region" description="Helical" evidence="2">
    <location>
        <begin position="3"/>
        <end position="23"/>
    </location>
</feature>
<feature type="transmembrane region" description="Helical" evidence="2">
    <location>
        <begin position="77"/>
        <end position="97"/>
    </location>
</feature>
<feature type="transmembrane region" description="Helical" evidence="2">
    <location>
        <begin position="104"/>
        <end position="124"/>
    </location>
</feature>
<feature type="transmembrane region" description="Helical" evidence="2">
    <location>
        <begin position="143"/>
        <end position="163"/>
    </location>
</feature>
<feature type="non-consecutive residues" evidence="3">
    <location>
        <begin position="152"/>
        <end position="153"/>
    </location>
</feature>
<gene>
    <name type="primary">mt:ND1</name>
    <name type="synonym">ND1</name>
</gene>
<reference key="1">
    <citation type="journal article" date="1994" name="J. Mol. Evol.">
        <title>Phylogeny of the Drosophila obscura species group deduced from mitochondrial DNA sequences.</title>
        <authorList>
            <person name="Barrio E."/>
            <person name="Latorre A."/>
            <person name="Moya A."/>
        </authorList>
    </citation>
    <scope>NUCLEOTIDE SEQUENCE [GENOMIC DNA]</scope>
</reference>
<comment type="function">
    <text evidence="1">Core subunit of the mitochondrial membrane respiratory chain NADH dehydrogenase (Complex I) that is believed to belong to the minimal assembly required for catalysis. Complex I functions in the transfer of electrons from NADH to the respiratory chain. The immediate electron acceptor for the enzyme is believed to be ubiquinone (By similarity).</text>
</comment>
<comment type="catalytic activity">
    <reaction>
        <text>a ubiquinone + NADH + 5 H(+)(in) = a ubiquinol + NAD(+) + 4 H(+)(out)</text>
        <dbReference type="Rhea" id="RHEA:29091"/>
        <dbReference type="Rhea" id="RHEA-COMP:9565"/>
        <dbReference type="Rhea" id="RHEA-COMP:9566"/>
        <dbReference type="ChEBI" id="CHEBI:15378"/>
        <dbReference type="ChEBI" id="CHEBI:16389"/>
        <dbReference type="ChEBI" id="CHEBI:17976"/>
        <dbReference type="ChEBI" id="CHEBI:57540"/>
        <dbReference type="ChEBI" id="CHEBI:57945"/>
        <dbReference type="EC" id="7.1.1.2"/>
    </reaction>
</comment>
<comment type="subcellular location">
    <subcellularLocation>
        <location evidence="1">Mitochondrion inner membrane</location>
        <topology evidence="1">Multi-pass membrane protein</topology>
    </subcellularLocation>
</comment>
<comment type="similarity">
    <text evidence="3">Belongs to the complex I subunit 1 family.</text>
</comment>
<name>NU1M_DROGU</name>
<keyword id="KW-0249">Electron transport</keyword>
<keyword id="KW-0472">Membrane</keyword>
<keyword id="KW-0496">Mitochondrion</keyword>
<keyword id="KW-0999">Mitochondrion inner membrane</keyword>
<keyword id="KW-0520">NAD</keyword>
<keyword id="KW-0679">Respiratory chain</keyword>
<keyword id="KW-1278">Translocase</keyword>
<keyword id="KW-0812">Transmembrane</keyword>
<keyword id="KW-1133">Transmembrane helix</keyword>
<keyword id="KW-0813">Transport</keyword>
<keyword id="KW-0830">Ubiquinone</keyword>
<sequence length="163" mass="18169">MEFILSLIGSLLLIICVLVSVAFLTLLERKVLGYIQIRKGPNKVGLMGIPQPFCDAIKLFTKEQTYPLLSNYLSYYISPIFSLFLSLFVWMCMPFFVKLNSFNLGGLFFLCCTSLGVYTVMVAGWSSNSNYALLGGLRAVAQTISYEVSLALIGFKILLFSLL</sequence>
<protein>
    <recommendedName>
        <fullName>NADH-ubiquinone oxidoreductase chain 1</fullName>
        <ecNumber>7.1.1.2</ecNumber>
    </recommendedName>
    <alternativeName>
        <fullName>NADH dehydrogenase subunit 1</fullName>
    </alternativeName>
</protein>